<organism>
    <name type="scientific">Mus musculus</name>
    <name type="common">Mouse</name>
    <dbReference type="NCBI Taxonomy" id="10090"/>
    <lineage>
        <taxon>Eukaryota</taxon>
        <taxon>Metazoa</taxon>
        <taxon>Chordata</taxon>
        <taxon>Craniata</taxon>
        <taxon>Vertebrata</taxon>
        <taxon>Euteleostomi</taxon>
        <taxon>Mammalia</taxon>
        <taxon>Eutheria</taxon>
        <taxon>Euarchontoglires</taxon>
        <taxon>Glires</taxon>
        <taxon>Rodentia</taxon>
        <taxon>Myomorpha</taxon>
        <taxon>Muroidea</taxon>
        <taxon>Muridae</taxon>
        <taxon>Murinae</taxon>
        <taxon>Mus</taxon>
        <taxon>Mus</taxon>
    </lineage>
</organism>
<dbReference type="EC" id="3.4.19.12" evidence="2"/>
<dbReference type="EMBL" id="D84096">
    <property type="protein sequence ID" value="BAA12220.1"/>
    <property type="molecule type" value="mRNA"/>
</dbReference>
<dbReference type="EMBL" id="AK129083">
    <property type="protein sequence ID" value="BAC97893.1"/>
    <property type="status" value="ALT_INIT"/>
    <property type="molecule type" value="mRNA"/>
</dbReference>
<dbReference type="EMBL" id="AK153675">
    <property type="protein sequence ID" value="BAE32139.1"/>
    <property type="molecule type" value="mRNA"/>
</dbReference>
<dbReference type="EMBL" id="AK157970">
    <property type="protein sequence ID" value="BAE34291.1"/>
    <property type="molecule type" value="mRNA"/>
</dbReference>
<dbReference type="EMBL" id="AK165156">
    <property type="protein sequence ID" value="BAE38053.1"/>
    <property type="molecule type" value="mRNA"/>
</dbReference>
<dbReference type="EMBL" id="AK172443">
    <property type="protein sequence ID" value="BAE43006.1"/>
    <property type="molecule type" value="mRNA"/>
</dbReference>
<dbReference type="EMBL" id="CH466525">
    <property type="protein sequence ID" value="EDL11620.1"/>
    <property type="molecule type" value="Genomic_DNA"/>
</dbReference>
<dbReference type="EMBL" id="BC007134">
    <property type="protein sequence ID" value="AAH07134.1"/>
    <property type="molecule type" value="mRNA"/>
</dbReference>
<dbReference type="CCDS" id="CCDS40495.1">
    <molecule id="P52479-2"/>
</dbReference>
<dbReference type="CCDS" id="CCDS80938.1">
    <molecule id="P52479-1"/>
</dbReference>
<dbReference type="RefSeq" id="NP_001297559.1">
    <molecule id="P52479-1"/>
    <property type="nucleotide sequence ID" value="NM_001310630.1"/>
</dbReference>
<dbReference type="RefSeq" id="NP_033488.1">
    <molecule id="P52479-2"/>
    <property type="nucleotide sequence ID" value="NM_009462.2"/>
</dbReference>
<dbReference type="SMR" id="P52479"/>
<dbReference type="BioGRID" id="204424">
    <property type="interactions" value="17"/>
</dbReference>
<dbReference type="CORUM" id="P52479"/>
<dbReference type="FunCoup" id="P52479">
    <property type="interactions" value="3305"/>
</dbReference>
<dbReference type="IntAct" id="P52479">
    <property type="interactions" value="6"/>
</dbReference>
<dbReference type="MINT" id="P52479"/>
<dbReference type="STRING" id="10090.ENSMUSP00000123590"/>
<dbReference type="ChEMBL" id="CHEMBL4879440"/>
<dbReference type="MEROPS" id="C19.018"/>
<dbReference type="GlyGen" id="P52479">
    <property type="glycosylation" value="3 sites, 1 O-linked glycan (1 site)"/>
</dbReference>
<dbReference type="iPTMnet" id="P52479"/>
<dbReference type="PhosphoSitePlus" id="P52479"/>
<dbReference type="SwissPalm" id="P52479"/>
<dbReference type="jPOST" id="P52479"/>
<dbReference type="PaxDb" id="10090-ENSMUSP00000123590"/>
<dbReference type="PeptideAtlas" id="P52479"/>
<dbReference type="ProteomicsDB" id="298358">
    <molecule id="P52479-1"/>
</dbReference>
<dbReference type="ProteomicsDB" id="298359">
    <molecule id="P52479-2"/>
</dbReference>
<dbReference type="Pumba" id="P52479"/>
<dbReference type="Antibodypedia" id="1716">
    <property type="antibodies" value="396 antibodies from 39 providers"/>
</dbReference>
<dbReference type="DNASU" id="22224"/>
<dbReference type="Ensembl" id="ENSMUST00000108988.9">
    <molecule id="P52479-1"/>
    <property type="protein sequence ID" value="ENSMUSP00000104616.3"/>
    <property type="gene ID" value="ENSMUSG00000031826.21"/>
</dbReference>
<dbReference type="Ensembl" id="ENSMUST00000144458.8">
    <molecule id="P52479-2"/>
    <property type="protein sequence ID" value="ENSMUSP00000123590.2"/>
    <property type="gene ID" value="ENSMUSG00000031826.21"/>
</dbReference>
<dbReference type="GeneID" id="22224"/>
<dbReference type="KEGG" id="mmu:22224"/>
<dbReference type="UCSC" id="uc009nqn.1">
    <molecule id="P52479-2"/>
    <property type="organism name" value="mouse"/>
</dbReference>
<dbReference type="UCSC" id="uc009nqo.1">
    <molecule id="P52479-1"/>
    <property type="organism name" value="mouse"/>
</dbReference>
<dbReference type="AGR" id="MGI:894652"/>
<dbReference type="CTD" id="9100"/>
<dbReference type="MGI" id="MGI:894652">
    <property type="gene designation" value="Usp10"/>
</dbReference>
<dbReference type="VEuPathDB" id="HostDB:ENSMUSG00000031826"/>
<dbReference type="eggNOG" id="KOG1871">
    <property type="taxonomic scope" value="Eukaryota"/>
</dbReference>
<dbReference type="GeneTree" id="ENSGT00550000074994"/>
<dbReference type="HOGENOM" id="CLU_008279_4_1_1"/>
<dbReference type="InParanoid" id="P52479"/>
<dbReference type="OMA" id="RTCGSPQ"/>
<dbReference type="PhylomeDB" id="P52479"/>
<dbReference type="TreeFam" id="TF323203"/>
<dbReference type="Reactome" id="R-MMU-5656169">
    <property type="pathway name" value="Termination of translesion DNA synthesis"/>
</dbReference>
<dbReference type="Reactome" id="R-MMU-5689880">
    <property type="pathway name" value="Ub-specific processing proteases"/>
</dbReference>
<dbReference type="BioGRID-ORCS" id="22224">
    <property type="hits" value="5 hits in 112 CRISPR screens"/>
</dbReference>
<dbReference type="ChiTaRS" id="Usp10">
    <property type="organism name" value="mouse"/>
</dbReference>
<dbReference type="PRO" id="PR:P52479"/>
<dbReference type="Proteomes" id="UP000000589">
    <property type="component" value="Chromosome 8"/>
</dbReference>
<dbReference type="RNAct" id="P52479">
    <property type="molecule type" value="protein"/>
</dbReference>
<dbReference type="Bgee" id="ENSMUSG00000031826">
    <property type="expression patterns" value="Expressed in embryonic post-anal tail and 268 other cell types or tissues"/>
</dbReference>
<dbReference type="ExpressionAtlas" id="P52479">
    <property type="expression patterns" value="baseline and differential"/>
</dbReference>
<dbReference type="GO" id="GO:0005737">
    <property type="term" value="C:cytoplasm"/>
    <property type="evidence" value="ECO:0000250"/>
    <property type="project" value="UniProtKB"/>
</dbReference>
<dbReference type="GO" id="GO:0022626">
    <property type="term" value="C:cytosolic ribosome"/>
    <property type="evidence" value="ECO:0007669"/>
    <property type="project" value="Ensembl"/>
</dbReference>
<dbReference type="GO" id="GO:0005769">
    <property type="term" value="C:early endosome"/>
    <property type="evidence" value="ECO:0000250"/>
    <property type="project" value="UniProtKB"/>
</dbReference>
<dbReference type="GO" id="GO:0045111">
    <property type="term" value="C:intermediate filament cytoskeleton"/>
    <property type="evidence" value="ECO:0007669"/>
    <property type="project" value="Ensembl"/>
</dbReference>
<dbReference type="GO" id="GO:0005654">
    <property type="term" value="C:nucleoplasm"/>
    <property type="evidence" value="ECO:0007669"/>
    <property type="project" value="Ensembl"/>
</dbReference>
<dbReference type="GO" id="GO:0005634">
    <property type="term" value="C:nucleus"/>
    <property type="evidence" value="ECO:0000250"/>
    <property type="project" value="UniProtKB"/>
</dbReference>
<dbReference type="GO" id="GO:0032991">
    <property type="term" value="C:protein-containing complex"/>
    <property type="evidence" value="ECO:0000250"/>
    <property type="project" value="UniProtKB"/>
</dbReference>
<dbReference type="GO" id="GO:0004843">
    <property type="term" value="F:cysteine-type deubiquitinase activity"/>
    <property type="evidence" value="ECO:0000250"/>
    <property type="project" value="UniProtKB"/>
</dbReference>
<dbReference type="GO" id="GO:0004197">
    <property type="term" value="F:cysteine-type endopeptidase activity"/>
    <property type="evidence" value="ECO:0000250"/>
    <property type="project" value="UniProtKB"/>
</dbReference>
<dbReference type="GO" id="GO:0140678">
    <property type="term" value="F:molecular function inhibitor activity"/>
    <property type="evidence" value="ECO:0007669"/>
    <property type="project" value="Ensembl"/>
</dbReference>
<dbReference type="GO" id="GO:0002039">
    <property type="term" value="F:p53 binding"/>
    <property type="evidence" value="ECO:0000250"/>
    <property type="project" value="UniProtKB"/>
</dbReference>
<dbReference type="GO" id="GO:0044325">
    <property type="term" value="F:transmembrane transporter binding"/>
    <property type="evidence" value="ECO:0000250"/>
    <property type="project" value="UniProtKB"/>
</dbReference>
<dbReference type="GO" id="GO:0006914">
    <property type="term" value="P:autophagy"/>
    <property type="evidence" value="ECO:0007669"/>
    <property type="project" value="UniProtKB-KW"/>
</dbReference>
<dbReference type="GO" id="GO:0071347">
    <property type="term" value="P:cellular response to interleukin-1"/>
    <property type="evidence" value="ECO:0000250"/>
    <property type="project" value="UniProtKB"/>
</dbReference>
<dbReference type="GO" id="GO:0006974">
    <property type="term" value="P:DNA damage response"/>
    <property type="evidence" value="ECO:0000250"/>
    <property type="project" value="UniProtKB"/>
</dbReference>
<dbReference type="GO" id="GO:0030330">
    <property type="term" value="P:DNA damage response, signal transduction by p53 class mediator"/>
    <property type="evidence" value="ECO:0000250"/>
    <property type="project" value="UniProtKB"/>
</dbReference>
<dbReference type="GO" id="GO:0006281">
    <property type="term" value="P:DNA repair"/>
    <property type="evidence" value="ECO:0007669"/>
    <property type="project" value="UniProtKB-KW"/>
</dbReference>
<dbReference type="GO" id="GO:0035520">
    <property type="term" value="P:monoubiquitinated protein deubiquitination"/>
    <property type="evidence" value="ECO:0007669"/>
    <property type="project" value="Ensembl"/>
</dbReference>
<dbReference type="GO" id="GO:0043124">
    <property type="term" value="P:negative regulation of canonical NF-kappaB signal transduction"/>
    <property type="evidence" value="ECO:0000250"/>
    <property type="project" value="UniProtKB"/>
</dbReference>
<dbReference type="GO" id="GO:0062030">
    <property type="term" value="P:negative regulation of stress granule assembly"/>
    <property type="evidence" value="ECO:0000250"/>
    <property type="project" value="UniProtKB"/>
</dbReference>
<dbReference type="GO" id="GO:0016579">
    <property type="term" value="P:protein deubiquitination"/>
    <property type="evidence" value="ECO:0000250"/>
    <property type="project" value="UniProtKB"/>
</dbReference>
<dbReference type="GO" id="GO:0006508">
    <property type="term" value="P:proteolysis"/>
    <property type="evidence" value="ECO:0007669"/>
    <property type="project" value="UniProtKB-KW"/>
</dbReference>
<dbReference type="GO" id="GO:0010506">
    <property type="term" value="P:regulation of autophagy"/>
    <property type="evidence" value="ECO:0000250"/>
    <property type="project" value="UniProtKB"/>
</dbReference>
<dbReference type="GO" id="GO:0072344">
    <property type="term" value="P:rescue of stalled ribosome"/>
    <property type="evidence" value="ECO:0000250"/>
    <property type="project" value="UniProtKB"/>
</dbReference>
<dbReference type="CDD" id="cd02257">
    <property type="entry name" value="Peptidase_C19"/>
    <property type="match status" value="1"/>
</dbReference>
<dbReference type="FunFam" id="3.90.70.10:FF:000015">
    <property type="entry name" value="Ubiquitin specific peptidase 10"/>
    <property type="match status" value="1"/>
</dbReference>
<dbReference type="Gene3D" id="3.90.70.10">
    <property type="entry name" value="Cysteine proteinases"/>
    <property type="match status" value="1"/>
</dbReference>
<dbReference type="InterPro" id="IPR009818">
    <property type="entry name" value="PAM2_motif"/>
</dbReference>
<dbReference type="InterPro" id="IPR038765">
    <property type="entry name" value="Papain-like_cys_pep_sf"/>
</dbReference>
<dbReference type="InterPro" id="IPR050164">
    <property type="entry name" value="Peptidase_C19"/>
</dbReference>
<dbReference type="InterPro" id="IPR001394">
    <property type="entry name" value="Peptidase_C19_UCH"/>
</dbReference>
<dbReference type="InterPro" id="IPR018200">
    <property type="entry name" value="USP_CS"/>
</dbReference>
<dbReference type="InterPro" id="IPR028889">
    <property type="entry name" value="USP_dom"/>
</dbReference>
<dbReference type="PANTHER" id="PTHR24006">
    <property type="entry name" value="UBIQUITIN CARBOXYL-TERMINAL HYDROLASE"/>
    <property type="match status" value="1"/>
</dbReference>
<dbReference type="PANTHER" id="PTHR24006:SF687">
    <property type="entry name" value="UBIQUITIN CARBOXYL-TERMINAL HYDROLASE 10"/>
    <property type="match status" value="1"/>
</dbReference>
<dbReference type="Pfam" id="PF07145">
    <property type="entry name" value="PAM2"/>
    <property type="match status" value="1"/>
</dbReference>
<dbReference type="Pfam" id="PF00443">
    <property type="entry name" value="UCH"/>
    <property type="match status" value="1"/>
</dbReference>
<dbReference type="SUPFAM" id="SSF54001">
    <property type="entry name" value="Cysteine proteinases"/>
    <property type="match status" value="1"/>
</dbReference>
<dbReference type="PROSITE" id="PS00972">
    <property type="entry name" value="USP_1"/>
    <property type="match status" value="1"/>
</dbReference>
<dbReference type="PROSITE" id="PS00973">
    <property type="entry name" value="USP_2"/>
    <property type="match status" value="1"/>
</dbReference>
<dbReference type="PROSITE" id="PS50235">
    <property type="entry name" value="USP_3"/>
    <property type="match status" value="1"/>
</dbReference>
<sequence>MALHNPQYIFGDFSPDEFNQFFVTPRSSVELPPYSGTLCSIQAEDELPDGQEHQRIEFGVDEVIEPSEGLPPTPSYSISSTLNPQAPEFILGCTTSKKIPEAVEKDETYSSIDQYPASALALESNSNAEAETLENDSGAGGLGQRERKKKKKRPPGYYSYLKDGGEDSASPATLVNGHATSVGTSGEAVEDAEFMDVLPPVMPRTCDSPQNPVDFISGPVPDSPFPRTLGGDARTAGLCEGCHEADFEQPCLPADSLLRTAGTQPYVGTDTTENFAVANGKILESPGEDTAANGAELHTDEGADLDPAKPESQSPPAESALSASGAIPISQPAKSWASLFHDSKPSASSPMAYVETKCSPPVPSPLASEKQMEVKEGLVPVSEDPVAIKIAELLETVTLIHKPVSLQPRGLINKGNWCYINATLQALVACPPMYHLMKFIPLYSKVQRPCTSTPMIDSFVRLMNEFTNMPVPPKPRQALGDKIVRDIRPGAAFEPTYIYRLLTVIKSSLSEKGRQEDAEEYLGFILNGLHEEMLSLKKLLSPTHEKHSVSNGPRSDLIEDEELEDTGKGSEDEWEQVGPKNKTSITRQADFVQTPITGIFGGHIRSVVYQQSSKESATLQLFFTLQLDIQSDKIRTVQDALESLVARESVQGYTTKTKQEVEVSRRVTLEKLPPVLVLHLKRFVYEKTGGCQKLVKNIDYPVDLEISRELLSPGIKNKNFKCQRTYRLFAVVYHHGNSATGGHYTTDVFQIGLNGWLRIDDQTVKVINQYQVVKPPADRTAYLLYYRRVDLL</sequence>
<evidence type="ECO:0000250" key="1"/>
<evidence type="ECO:0000250" key="2">
    <source>
        <dbReference type="UniProtKB" id="Q14694"/>
    </source>
</evidence>
<evidence type="ECO:0000255" key="3">
    <source>
        <dbReference type="PROSITE-ProRule" id="PRU10092"/>
    </source>
</evidence>
<evidence type="ECO:0000255" key="4">
    <source>
        <dbReference type="PROSITE-ProRule" id="PRU10093"/>
    </source>
</evidence>
<evidence type="ECO:0000256" key="5">
    <source>
        <dbReference type="SAM" id="MobiDB-lite"/>
    </source>
</evidence>
<evidence type="ECO:0000269" key="6">
    <source>
    </source>
</evidence>
<evidence type="ECO:0000303" key="7">
    <source>
    </source>
</evidence>
<evidence type="ECO:0000303" key="8">
    <source ref="1"/>
</evidence>
<evidence type="ECO:0000305" key="9"/>
<evidence type="ECO:0007744" key="10">
    <source>
    </source>
</evidence>
<evidence type="ECO:0007744" key="11">
    <source>
    </source>
</evidence>
<evidence type="ECO:0007744" key="12">
    <source>
    </source>
</evidence>
<evidence type="ECO:0007744" key="13">
    <source>
    </source>
</evidence>
<evidence type="ECO:0007744" key="14">
    <source>
    </source>
</evidence>
<comment type="function">
    <text evidence="2">Hydrolase that can remove conjugated ubiquitin from target proteins such as p53/TP53, RPS2/us5, RPS3/us3, RPS10/eS10, BECN1, SNX3 and CFTR. Acts as an essential regulator of p53/TP53 stability: in unstressed cells, specifically deubiquitinates p53/TP53 in the cytoplasm, leading to counteract MDM2 action and stabilize p53/TP53. Following DNA damage, translocates to the nucleus and deubiquitinates p53/TP53, leading to regulate the p53/TP53-dependent DNA damage response. Component of a regulatory loop that controls autophagy and p53/TP53 levels: mediates deubiquitination of BECN1, a key regulator of autophagy, leading to stabilize the PIK3C3/VPS34-containing complexes. In turn, PIK3C3/VPS34-containing complexes regulate USP10 stability, suggesting the existence of a regulatory system by which PIK3C3/VPS34-containing complexes regulate p53/TP53 protein levels via USP10 and USP13. Does not deubiquitinate MDM2. Plays a key role in 40S ribosome subunit recycling when a ribosome has stalled during translation: acts both by inhibiting formation of stress granules, which store stalled translation pre-initiation complexes, and mediating deubiquitination of 40S ribosome subunits. Acts as a negative regulator of stress granules formation by lowering G3BP1 and G3BP2 valence, thereby preventing G3BP1 and G3BP2 ability to undergo liquid-liquid phase separation (LLPS) and assembly of stress granules. Promotes 40S ribosome subunit recycling following ribosome dissociation in response to ribosome stalling by mediating deubiquitination of 40S ribosomal proteins RPS2/us5, RPS3/us3 and RPS10/eS10, thereby preventing their degradation by the proteasome. Part of a ribosome quality control that takes place when ribosomes have stalled during translation initiation (iRQC): USP10 acts by removing monoubiquitination of RPS2/us5 and RPS3/us3, promoting 40S ribosomal subunit recycling. Deubiquitinates CFTR in early endosomes, enhancing its endocytic recycling. Involved in a TANK-dependent negative feedback response to attenuate NF-kappa-B activation via deubiquitinating IKBKG or TRAF6 in response to interleukin-1-beta (IL1B) stimulation or upon DNA damage. Deubiquitinates TBX21 leading to its stabilization. Plays a negative role in the RLR signaling pathway upon RNA virus infection by blocking the RIGI-mediated MAVS activation. Mechanistically, removes the unanchored 'Lys-63'-linked polyubiquitin chains of MAVS to inhibit its aggregation, essential for its activation.</text>
</comment>
<comment type="catalytic activity">
    <reaction evidence="2">
        <text>Thiol-dependent hydrolysis of ester, thioester, amide, peptide and isopeptide bonds formed by the C-terminal Gly of ubiquitin (a 76-residue protein attached to proteins as an intracellular targeting signal).</text>
        <dbReference type="EC" id="3.4.19.12"/>
    </reaction>
</comment>
<comment type="activity regulation">
    <text evidence="1">Specifically inhibited by spautin-1 (specific and potent autophagy inhibitor-1), a derivative of MBCQ that binds to USP10 and inhibits deubiquitinase activity. Regulated by PIK3C3/VPS34-containing complexes (By similarity).</text>
</comment>
<comment type="subunit">
    <text evidence="2">Found in a deubiquitination complex with TANK, USP10 and ZC3H12A; this complex inhibits genotoxic stress- or interleukin-1-beta (IL1B)-mediated NF-kappa-B activation by promoting IKBKG or TRAF6 deubiquitination. Interacts with IKBKG; this interaction increases in response to DNA damage. Interacts with TANK; this interaction increases in response to DNA damage. Interacts with TRAF6; this interaction increases in response to DNA damage. Interacts with ZC3H12A; this interaction increases in response to DNA damage. Interacts with G3BP1 (via NTF2 domain) and G3BP2 (via NTF2 domain); inhibiting stress granule formation.</text>
</comment>
<comment type="interaction">
    <interactant intactId="EBI-8327299">
        <id>P52479</id>
    </interactant>
    <interactant intactId="EBI-774043">
        <id>P10637</id>
        <label>Mapt</label>
    </interactant>
    <organismsDiffer>false</organismsDiffer>
    <experiments>3</experiments>
</comment>
<comment type="subcellular location">
    <subcellularLocation>
        <location evidence="2">Cytoplasm</location>
    </subcellularLocation>
    <subcellularLocation>
        <location evidence="2">Nucleus</location>
    </subcellularLocation>
    <subcellularLocation>
        <location evidence="2">Early endosome</location>
    </subcellularLocation>
    <text evidence="2">Cytoplasmic in normal conditions (By similarity). After DNA damage, translocates to the nucleus following phosphorylation by ATM (By similarity).</text>
</comment>
<comment type="alternative products">
    <event type="alternative splicing"/>
    <isoform>
        <id>P52479-1</id>
        <name>1</name>
        <sequence type="displayed"/>
    </isoform>
    <isoform>
        <id>P52479-2</id>
        <name>2</name>
        <sequence type="described" ref="VSP_038870"/>
    </isoform>
</comment>
<comment type="PTM">
    <text evidence="1">Phosphorylated by ATM following DNA damage, leading to stabilization and translocation it to the nucleus.</text>
</comment>
<comment type="PTM">
    <text evidence="1">Ubiquitinated. Deubiquitinated by USP13 (By similarity).</text>
</comment>
<comment type="disruption phenotype">
    <text evidence="6">Mice with a deficiency in USP10 show more potent resistance to RNA virus infection.</text>
</comment>
<comment type="similarity">
    <text evidence="9">Belongs to the peptidase C19 family. USP10 subfamily.</text>
</comment>
<comment type="sequence caution" evidence="9">
    <conflict type="erroneous initiation">
        <sequence resource="EMBL-CDS" id="BAC97893"/>
    </conflict>
</comment>
<keyword id="KW-0007">Acetylation</keyword>
<keyword id="KW-0025">Alternative splicing</keyword>
<keyword id="KW-0072">Autophagy</keyword>
<keyword id="KW-0963">Cytoplasm</keyword>
<keyword id="KW-0227">DNA damage</keyword>
<keyword id="KW-0234">DNA repair</keyword>
<keyword id="KW-0967">Endosome</keyword>
<keyword id="KW-0378">Hydrolase</keyword>
<keyword id="KW-0539">Nucleus</keyword>
<keyword id="KW-0597">Phosphoprotein</keyword>
<keyword id="KW-0645">Protease</keyword>
<keyword id="KW-1185">Reference proteome</keyword>
<keyword id="KW-0788">Thiol protease</keyword>
<keyword id="KW-0832">Ubl conjugation</keyword>
<keyword id="KW-0833">Ubl conjugation pathway</keyword>
<feature type="initiator methionine" description="Removed" evidence="2">
    <location>
        <position position="1"/>
    </location>
</feature>
<feature type="chain" id="PRO_0000080630" description="Ubiquitin carboxyl-terminal hydrolase 10">
    <location>
        <begin position="2"/>
        <end position="792"/>
    </location>
</feature>
<feature type="domain" description="USP">
    <location>
        <begin position="409"/>
        <end position="789"/>
    </location>
</feature>
<feature type="region of interest" description="Interaction with p53/TP53" evidence="1">
    <location>
        <begin position="2"/>
        <end position="99"/>
    </location>
</feature>
<feature type="region of interest" description="G3BP1-binding" evidence="2">
    <location>
        <begin position="6"/>
        <end position="21"/>
    </location>
</feature>
<feature type="region of interest" description="Disordered" evidence="5">
    <location>
        <begin position="126"/>
        <end position="164"/>
    </location>
</feature>
<feature type="region of interest" description="Disordered" evidence="5">
    <location>
        <begin position="300"/>
        <end position="323"/>
    </location>
</feature>
<feature type="region of interest" description="Disordered" evidence="5">
    <location>
        <begin position="350"/>
        <end position="369"/>
    </location>
</feature>
<feature type="region of interest" description="Disordered" evidence="5">
    <location>
        <begin position="542"/>
        <end position="580"/>
    </location>
</feature>
<feature type="compositionally biased region" description="Basic and acidic residues" evidence="5">
    <location>
        <begin position="300"/>
        <end position="309"/>
    </location>
</feature>
<feature type="active site" description="Nucleophile" evidence="3 4">
    <location>
        <position position="418"/>
    </location>
</feature>
<feature type="active site" description="Proton acceptor" evidence="3 4">
    <location>
        <position position="743"/>
    </location>
</feature>
<feature type="modified residue" description="N-acetylalanine" evidence="2">
    <location>
        <position position="2"/>
    </location>
</feature>
<feature type="modified residue" description="Phosphothreonine" evidence="2">
    <location>
        <position position="24"/>
    </location>
</feature>
<feature type="modified residue" description="Phosphoserine" evidence="14">
    <location>
        <position position="208"/>
    </location>
</feature>
<feature type="modified residue" description="Phosphoserine" evidence="14">
    <location>
        <position position="223"/>
    </location>
</feature>
<feature type="modified residue" description="Phosphoserine" evidence="2">
    <location>
        <position position="314"/>
    </location>
</feature>
<feature type="modified residue" description="Phosphoserine; by ATM" evidence="2">
    <location>
        <position position="330"/>
    </location>
</feature>
<feature type="modified residue" description="Phosphoserine" evidence="10 14">
    <location>
        <position position="359"/>
    </location>
</feature>
<feature type="modified residue" description="Phosphoserine" evidence="2">
    <location>
        <position position="364"/>
    </location>
</feature>
<feature type="modified residue" description="Phosphoserine" evidence="2">
    <location>
        <position position="541"/>
    </location>
</feature>
<feature type="modified residue" description="Phosphothreonine" evidence="14">
    <location>
        <position position="566"/>
    </location>
</feature>
<feature type="modified residue" description="Phosphoserine" evidence="11 12 13 14">
    <location>
        <position position="570"/>
    </location>
</feature>
<feature type="splice variant" id="VSP_038870" description="In isoform 2." evidence="7 8">
    <original>D</original>
    <variation>DA</variation>
    <location>
        <position position="49"/>
    </location>
</feature>
<feature type="sequence conflict" description="In Ref. 5; AAH07134." evidence="9" ref="5">
    <original>P</original>
    <variation>R</variation>
    <location>
        <position position="72"/>
    </location>
</feature>
<feature type="sequence conflict" description="In Ref. 5; AAH07134." evidence="9" ref="5">
    <original>E</original>
    <variation>D</variation>
    <location>
        <position position="101"/>
    </location>
</feature>
<feature type="sequence conflict" description="In Ref. 5; AAH07134." evidence="9" ref="5">
    <original>N</original>
    <variation>S</variation>
    <location>
        <position position="293"/>
    </location>
</feature>
<feature type="sequence conflict" description="In Ref. 5; AAH07134." evidence="9" ref="5">
    <original>A</original>
    <variation>S</variation>
    <location>
        <position position="347"/>
    </location>
</feature>
<feature type="sequence conflict" description="In Ref. 3; BAE34291." evidence="9" ref="3">
    <original>R</original>
    <variation>G</variation>
    <location>
        <position position="448"/>
    </location>
</feature>
<feature type="sequence conflict" description="In Ref. 3; BAE32139." evidence="9" ref="3">
    <original>P</original>
    <variation>T</variation>
    <location>
        <position position="472"/>
    </location>
</feature>
<feature type="sequence conflict" description="In Ref. 3; BAE38053." evidence="9" ref="3">
    <original>G</original>
    <variation>R</variation>
    <location>
        <position position="528"/>
    </location>
</feature>
<reference key="1">
    <citation type="submission" date="1996-04" db="EMBL/GenBank/DDBJ databases">
        <title>Cloning from a mouse osteoblastic cell line of a gene, encoding a ubiquitin carboxyl-terminal hydrolase related polypeptide, down regulated during ascorbic acid dependent differentiation.</title>
        <authorList>
            <person name="Ito M."/>
            <person name="Hitomi K."/>
            <person name="Tsukagoshi N."/>
        </authorList>
    </citation>
    <scope>NUCLEOTIDE SEQUENCE [MRNA] (ISOFORM 2)</scope>
</reference>
<reference key="2">
    <citation type="journal article" date="2003" name="DNA Res.">
        <title>Prediction of the coding sequences of mouse homologues of KIAA gene: III. The complete nucleotide sequences of 500 mouse KIAA-homologous cDNAs identified by screening of terminal sequences of cDNA clones randomly sampled from size-fractionated libraries.</title>
        <authorList>
            <person name="Okazaki N."/>
            <person name="Kikuno R."/>
            <person name="Ohara R."/>
            <person name="Inamoto S."/>
            <person name="Koseki H."/>
            <person name="Hiraoka S."/>
            <person name="Saga Y."/>
            <person name="Nagase T."/>
            <person name="Ohara O."/>
            <person name="Koga H."/>
        </authorList>
    </citation>
    <scope>NUCLEOTIDE SEQUENCE [LARGE SCALE MRNA] (ISOFORM 1)</scope>
    <source>
        <tissue>Embryonic tail</tissue>
    </source>
</reference>
<reference key="3">
    <citation type="journal article" date="2005" name="Science">
        <title>The transcriptional landscape of the mammalian genome.</title>
        <authorList>
            <person name="Carninci P."/>
            <person name="Kasukawa T."/>
            <person name="Katayama S."/>
            <person name="Gough J."/>
            <person name="Frith M.C."/>
            <person name="Maeda N."/>
            <person name="Oyama R."/>
            <person name="Ravasi T."/>
            <person name="Lenhard B."/>
            <person name="Wells C."/>
            <person name="Kodzius R."/>
            <person name="Shimokawa K."/>
            <person name="Bajic V.B."/>
            <person name="Brenner S.E."/>
            <person name="Batalov S."/>
            <person name="Forrest A.R."/>
            <person name="Zavolan M."/>
            <person name="Davis M.J."/>
            <person name="Wilming L.G."/>
            <person name="Aidinis V."/>
            <person name="Allen J.E."/>
            <person name="Ambesi-Impiombato A."/>
            <person name="Apweiler R."/>
            <person name="Aturaliya R.N."/>
            <person name="Bailey T.L."/>
            <person name="Bansal M."/>
            <person name="Baxter L."/>
            <person name="Beisel K.W."/>
            <person name="Bersano T."/>
            <person name="Bono H."/>
            <person name="Chalk A.M."/>
            <person name="Chiu K.P."/>
            <person name="Choudhary V."/>
            <person name="Christoffels A."/>
            <person name="Clutterbuck D.R."/>
            <person name="Crowe M.L."/>
            <person name="Dalla E."/>
            <person name="Dalrymple B.P."/>
            <person name="de Bono B."/>
            <person name="Della Gatta G."/>
            <person name="di Bernardo D."/>
            <person name="Down T."/>
            <person name="Engstrom P."/>
            <person name="Fagiolini M."/>
            <person name="Faulkner G."/>
            <person name="Fletcher C.F."/>
            <person name="Fukushima T."/>
            <person name="Furuno M."/>
            <person name="Futaki S."/>
            <person name="Gariboldi M."/>
            <person name="Georgii-Hemming P."/>
            <person name="Gingeras T.R."/>
            <person name="Gojobori T."/>
            <person name="Green R.E."/>
            <person name="Gustincich S."/>
            <person name="Harbers M."/>
            <person name="Hayashi Y."/>
            <person name="Hensch T.K."/>
            <person name="Hirokawa N."/>
            <person name="Hill D."/>
            <person name="Huminiecki L."/>
            <person name="Iacono M."/>
            <person name="Ikeo K."/>
            <person name="Iwama A."/>
            <person name="Ishikawa T."/>
            <person name="Jakt M."/>
            <person name="Kanapin A."/>
            <person name="Katoh M."/>
            <person name="Kawasawa Y."/>
            <person name="Kelso J."/>
            <person name="Kitamura H."/>
            <person name="Kitano H."/>
            <person name="Kollias G."/>
            <person name="Krishnan S.P."/>
            <person name="Kruger A."/>
            <person name="Kummerfeld S.K."/>
            <person name="Kurochkin I.V."/>
            <person name="Lareau L.F."/>
            <person name="Lazarevic D."/>
            <person name="Lipovich L."/>
            <person name="Liu J."/>
            <person name="Liuni S."/>
            <person name="McWilliam S."/>
            <person name="Madan Babu M."/>
            <person name="Madera M."/>
            <person name="Marchionni L."/>
            <person name="Matsuda H."/>
            <person name="Matsuzawa S."/>
            <person name="Miki H."/>
            <person name="Mignone F."/>
            <person name="Miyake S."/>
            <person name="Morris K."/>
            <person name="Mottagui-Tabar S."/>
            <person name="Mulder N."/>
            <person name="Nakano N."/>
            <person name="Nakauchi H."/>
            <person name="Ng P."/>
            <person name="Nilsson R."/>
            <person name="Nishiguchi S."/>
            <person name="Nishikawa S."/>
            <person name="Nori F."/>
            <person name="Ohara O."/>
            <person name="Okazaki Y."/>
            <person name="Orlando V."/>
            <person name="Pang K.C."/>
            <person name="Pavan W.J."/>
            <person name="Pavesi G."/>
            <person name="Pesole G."/>
            <person name="Petrovsky N."/>
            <person name="Piazza S."/>
            <person name="Reed J."/>
            <person name="Reid J.F."/>
            <person name="Ring B.Z."/>
            <person name="Ringwald M."/>
            <person name="Rost B."/>
            <person name="Ruan Y."/>
            <person name="Salzberg S.L."/>
            <person name="Sandelin A."/>
            <person name="Schneider C."/>
            <person name="Schoenbach C."/>
            <person name="Sekiguchi K."/>
            <person name="Semple C.A."/>
            <person name="Seno S."/>
            <person name="Sessa L."/>
            <person name="Sheng Y."/>
            <person name="Shibata Y."/>
            <person name="Shimada H."/>
            <person name="Shimada K."/>
            <person name="Silva D."/>
            <person name="Sinclair B."/>
            <person name="Sperling S."/>
            <person name="Stupka E."/>
            <person name="Sugiura K."/>
            <person name="Sultana R."/>
            <person name="Takenaka Y."/>
            <person name="Taki K."/>
            <person name="Tammoja K."/>
            <person name="Tan S.L."/>
            <person name="Tang S."/>
            <person name="Taylor M.S."/>
            <person name="Tegner J."/>
            <person name="Teichmann S.A."/>
            <person name="Ueda H.R."/>
            <person name="van Nimwegen E."/>
            <person name="Verardo R."/>
            <person name="Wei C.L."/>
            <person name="Yagi K."/>
            <person name="Yamanishi H."/>
            <person name="Zabarovsky E."/>
            <person name="Zhu S."/>
            <person name="Zimmer A."/>
            <person name="Hide W."/>
            <person name="Bult C."/>
            <person name="Grimmond S.M."/>
            <person name="Teasdale R.D."/>
            <person name="Liu E.T."/>
            <person name="Brusic V."/>
            <person name="Quackenbush J."/>
            <person name="Wahlestedt C."/>
            <person name="Mattick J.S."/>
            <person name="Hume D.A."/>
            <person name="Kai C."/>
            <person name="Sasaki D."/>
            <person name="Tomaru Y."/>
            <person name="Fukuda S."/>
            <person name="Kanamori-Katayama M."/>
            <person name="Suzuki M."/>
            <person name="Aoki J."/>
            <person name="Arakawa T."/>
            <person name="Iida J."/>
            <person name="Imamura K."/>
            <person name="Itoh M."/>
            <person name="Kato T."/>
            <person name="Kawaji H."/>
            <person name="Kawagashira N."/>
            <person name="Kawashima T."/>
            <person name="Kojima M."/>
            <person name="Kondo S."/>
            <person name="Konno H."/>
            <person name="Nakano K."/>
            <person name="Ninomiya N."/>
            <person name="Nishio T."/>
            <person name="Okada M."/>
            <person name="Plessy C."/>
            <person name="Shibata K."/>
            <person name="Shiraki T."/>
            <person name="Suzuki S."/>
            <person name="Tagami M."/>
            <person name="Waki K."/>
            <person name="Watahiki A."/>
            <person name="Okamura-Oho Y."/>
            <person name="Suzuki H."/>
            <person name="Kawai J."/>
            <person name="Hayashizaki Y."/>
        </authorList>
    </citation>
    <scope>NUCLEOTIDE SEQUENCE [LARGE SCALE MRNA] (ISOFORMS 1 AND 2)</scope>
    <source>
        <strain>C57BL/6J</strain>
        <strain>NOD</strain>
        <tissue>Inner ear</tissue>
        <tissue>Spleen</tissue>
        <tissue>Thymus</tissue>
    </source>
</reference>
<reference key="4">
    <citation type="submission" date="2005-07" db="EMBL/GenBank/DDBJ databases">
        <authorList>
            <person name="Mural R.J."/>
            <person name="Adams M.D."/>
            <person name="Myers E.W."/>
            <person name="Smith H.O."/>
            <person name="Venter J.C."/>
        </authorList>
    </citation>
    <scope>NUCLEOTIDE SEQUENCE [LARGE SCALE GENOMIC DNA]</scope>
</reference>
<reference key="5">
    <citation type="journal article" date="2004" name="Genome Res.">
        <title>The status, quality, and expansion of the NIH full-length cDNA project: the Mammalian Gene Collection (MGC).</title>
        <authorList>
            <consortium name="The MGC Project Team"/>
        </authorList>
    </citation>
    <scope>NUCLEOTIDE SEQUENCE [LARGE SCALE MRNA] (ISOFORM 1)</scope>
    <source>
        <tissue>Mammary tumor</tissue>
    </source>
</reference>
<reference key="6">
    <citation type="journal article" date="2004" name="Mol. Cell. Proteomics">
        <title>Phosphoproteomic analysis of the developing mouse brain.</title>
        <authorList>
            <person name="Ballif B.A."/>
            <person name="Villen J."/>
            <person name="Beausoleil S.A."/>
            <person name="Schwartz D."/>
            <person name="Gygi S.P."/>
        </authorList>
    </citation>
    <scope>PHOSPHORYLATION [LARGE SCALE ANALYSIS] AT SER-359</scope>
    <scope>IDENTIFICATION BY MASS SPECTROMETRY [LARGE SCALE ANALYSIS]</scope>
    <source>
        <tissue>Embryonic brain</tissue>
    </source>
</reference>
<reference key="7">
    <citation type="journal article" date="2007" name="Proc. Natl. Acad. Sci. U.S.A.">
        <title>Large-scale phosphorylation analysis of mouse liver.</title>
        <authorList>
            <person name="Villen J."/>
            <person name="Beausoleil S.A."/>
            <person name="Gerber S.A."/>
            <person name="Gygi S.P."/>
        </authorList>
    </citation>
    <scope>PHOSPHORYLATION [LARGE SCALE ANALYSIS] AT SER-570</scope>
    <scope>IDENTIFICATION BY MASS SPECTROMETRY [LARGE SCALE ANALYSIS]</scope>
    <source>
        <tissue>Liver</tissue>
    </source>
</reference>
<reference key="8">
    <citation type="journal article" date="2008" name="J. Proteome Res.">
        <title>Specific phosphopeptide enrichment with immobilized titanium ion affinity chromatography adsorbent for phosphoproteome analysis.</title>
        <authorList>
            <person name="Zhou H."/>
            <person name="Ye M."/>
            <person name="Dong J."/>
            <person name="Han G."/>
            <person name="Jiang X."/>
            <person name="Wu R."/>
            <person name="Zou H."/>
        </authorList>
    </citation>
    <scope>PHOSPHORYLATION [LARGE SCALE ANALYSIS] AT SER-570</scope>
    <scope>IDENTIFICATION BY MASS SPECTROMETRY [LARGE SCALE ANALYSIS]</scope>
    <source>
        <tissue>Liver</tissue>
    </source>
</reference>
<reference key="9">
    <citation type="journal article" date="2009" name="Immunity">
        <title>The phagosomal proteome in interferon-gamma-activated macrophages.</title>
        <authorList>
            <person name="Trost M."/>
            <person name="English L."/>
            <person name="Lemieux S."/>
            <person name="Courcelles M."/>
            <person name="Desjardins M."/>
            <person name="Thibault P."/>
        </authorList>
    </citation>
    <scope>PHOSPHORYLATION [LARGE SCALE ANALYSIS] AT SER-570</scope>
    <scope>IDENTIFICATION BY MASS SPECTROMETRY [LARGE SCALE ANALYSIS]</scope>
</reference>
<reference key="10">
    <citation type="journal article" date="2010" name="Cell">
        <title>A tissue-specific atlas of mouse protein phosphorylation and expression.</title>
        <authorList>
            <person name="Huttlin E.L."/>
            <person name="Jedrychowski M.P."/>
            <person name="Elias J.E."/>
            <person name="Goswami T."/>
            <person name="Rad R."/>
            <person name="Beausoleil S.A."/>
            <person name="Villen J."/>
            <person name="Haas W."/>
            <person name="Sowa M.E."/>
            <person name="Gygi S.P."/>
        </authorList>
    </citation>
    <scope>PHOSPHORYLATION [LARGE SCALE ANALYSIS] AT SER-208; SER-223; SER-359; THR-566 AND SER-570</scope>
    <scope>IDENTIFICATION BY MASS SPECTROMETRY [LARGE SCALE ANALYSIS]</scope>
    <source>
        <tissue>Brain</tissue>
        <tissue>Brown adipose tissue</tissue>
        <tissue>Heart</tissue>
        <tissue>Kidney</tissue>
        <tissue>Liver</tissue>
        <tissue>Lung</tissue>
        <tissue>Pancreas</tissue>
        <tissue>Spleen</tissue>
        <tissue>Testis</tissue>
    </source>
</reference>
<reference key="11">
    <citation type="journal article" date="2023" name="Cell. Mol. Immunol.">
        <title>MAVS-loaded unanchored Lys63-linked polyubiquitin chains activate the RIG-I-MAVS signaling cascade.</title>
        <authorList>
            <person name="Liu F."/>
            <person name="Zhuang W."/>
            <person name="Song B."/>
            <person name="Yang Y."/>
            <person name="Liu J."/>
            <person name="Zheng Y."/>
            <person name="Liu B."/>
            <person name="Zheng J."/>
            <person name="Zhao W."/>
            <person name="Gao C."/>
        </authorList>
    </citation>
    <scope>DISRUPTION PHENOTYPE</scope>
</reference>
<name>UBP10_MOUSE</name>
<accession>P52479</accession>
<accession>Q3T9L4</accession>
<accession>Q3TNN5</accession>
<accession>Q3TZB8</accession>
<accession>Q3U5E0</accession>
<accession>Q6ZQG9</accession>
<accession>Q91VY7</accession>
<protein>
    <recommendedName>
        <fullName>Ubiquitin carboxyl-terminal hydrolase 10</fullName>
        <ecNumber evidence="2">3.4.19.12</ecNumber>
    </recommendedName>
    <alternativeName>
        <fullName>Deubiquitinating enzyme 10</fullName>
    </alternativeName>
    <alternativeName>
        <fullName>Ubiquitin thioesterase 10</fullName>
    </alternativeName>
    <alternativeName>
        <fullName>Ubiquitin-specific-processing protease 10</fullName>
    </alternativeName>
</protein>
<gene>
    <name type="primary">Usp10</name>
    <name type="synonym">Kiaa0190</name>
    <name type="synonym">Ode-1</name>
    <name type="synonym">Uchrp</name>
</gene>
<proteinExistence type="evidence at protein level"/>